<comment type="function">
    <text>Catalyzes the radical-mediated synthesis of 7,8-didemethyl-8-hydroxy-5-deazariboflavin (FO) from 5-amino-6-(D-ribitylamino)uracil and L-tyrosine.</text>
</comment>
<comment type="catalytic activity">
    <reaction>
        <text>5-amino-6-(D-ribitylamino)uracil + L-tyrosine + S-adenosyl-L-methionine = 5-amino-5-(4-hydroxybenzyl)-6-(D-ribitylimino)-5,6-dihydrouracil + 2-iminoacetate + 5'-deoxyadenosine + L-methionine + H(+)</text>
        <dbReference type="Rhea" id="RHEA:55200"/>
        <dbReference type="ChEBI" id="CHEBI:15378"/>
        <dbReference type="ChEBI" id="CHEBI:15934"/>
        <dbReference type="ChEBI" id="CHEBI:17319"/>
        <dbReference type="ChEBI" id="CHEBI:57844"/>
        <dbReference type="ChEBI" id="CHEBI:58315"/>
        <dbReference type="ChEBI" id="CHEBI:59789"/>
        <dbReference type="ChEBI" id="CHEBI:77846"/>
        <dbReference type="ChEBI" id="CHEBI:85936"/>
        <dbReference type="EC" id="2.5.1.147"/>
    </reaction>
</comment>
<comment type="catalytic activity">
    <reaction>
        <text>5-amino-5-(4-hydroxybenzyl)-6-(D-ribitylimino)-5,6-dihydrouracil + S-adenosyl-L-methionine = 7,8-didemethyl-8-hydroxy-5-deazariboflavin + 5'-deoxyadenosine + L-methionine + NH4(+) + H(+)</text>
        <dbReference type="Rhea" id="RHEA:55204"/>
        <dbReference type="ChEBI" id="CHEBI:15378"/>
        <dbReference type="ChEBI" id="CHEBI:17319"/>
        <dbReference type="ChEBI" id="CHEBI:28938"/>
        <dbReference type="ChEBI" id="CHEBI:57844"/>
        <dbReference type="ChEBI" id="CHEBI:59789"/>
        <dbReference type="ChEBI" id="CHEBI:59904"/>
        <dbReference type="ChEBI" id="CHEBI:85936"/>
        <dbReference type="EC" id="4.3.1.32"/>
    </reaction>
</comment>
<comment type="cofactor">
    <cofactor evidence="1">
        <name>[4Fe-4S] cluster</name>
        <dbReference type="ChEBI" id="CHEBI:49883"/>
    </cofactor>
    <text evidence="1">Binds 2 [4Fe-4S] clusters. The clusters are coordinated with 3 cysteines and an exchangeable S-adenosyl-L-methionine.</text>
</comment>
<comment type="pathway">
    <text>Cofactor biosynthesis; coenzyme F0 biosynthesis.</text>
</comment>
<comment type="similarity">
    <text evidence="3">In the N-terminal section; belongs to the radical SAM superfamily. CofG family.</text>
</comment>
<comment type="similarity">
    <text evidence="3">In the C-terminal section; belongs to the radical SAM superfamily. CofH family.</text>
</comment>
<gene>
    <name type="primary">fbiC</name>
    <name type="ordered locus">ML1492</name>
</gene>
<reference key="1">
    <citation type="journal article" date="2001" name="Nature">
        <title>Massive gene decay in the leprosy bacillus.</title>
        <authorList>
            <person name="Cole S.T."/>
            <person name="Eiglmeier K."/>
            <person name="Parkhill J."/>
            <person name="James K.D."/>
            <person name="Thomson N.R."/>
            <person name="Wheeler P.R."/>
            <person name="Honore N."/>
            <person name="Garnier T."/>
            <person name="Churcher C.M."/>
            <person name="Harris D.E."/>
            <person name="Mungall K.L."/>
            <person name="Basham D."/>
            <person name="Brown D."/>
            <person name="Chillingworth T."/>
            <person name="Connor R."/>
            <person name="Davies R.M."/>
            <person name="Devlin K."/>
            <person name="Duthoy S."/>
            <person name="Feltwell T."/>
            <person name="Fraser A."/>
            <person name="Hamlin N."/>
            <person name="Holroyd S."/>
            <person name="Hornsby T."/>
            <person name="Jagels K."/>
            <person name="Lacroix C."/>
            <person name="Maclean J."/>
            <person name="Moule S."/>
            <person name="Murphy L.D."/>
            <person name="Oliver K."/>
            <person name="Quail M.A."/>
            <person name="Rajandream M.A."/>
            <person name="Rutherford K.M."/>
            <person name="Rutter S."/>
            <person name="Seeger K."/>
            <person name="Simon S."/>
            <person name="Simmonds M."/>
            <person name="Skelton J."/>
            <person name="Squares R."/>
            <person name="Squares S."/>
            <person name="Stevens K."/>
            <person name="Taylor K."/>
            <person name="Whitehead S."/>
            <person name="Woodward J.R."/>
            <person name="Barrell B.G."/>
        </authorList>
    </citation>
    <scope>NUCLEOTIDE SEQUENCE [LARGE SCALE GENOMIC DNA]</scope>
    <source>
        <strain>TN</strain>
    </source>
</reference>
<accession>Q9CBX6</accession>
<keyword id="KW-0004">4Fe-4S</keyword>
<keyword id="KW-0408">Iron</keyword>
<keyword id="KW-0411">Iron-sulfur</keyword>
<keyword id="KW-0456">Lyase</keyword>
<keyword id="KW-0479">Metal-binding</keyword>
<keyword id="KW-1185">Reference proteome</keyword>
<keyword id="KW-0949">S-adenosyl-L-methionine</keyword>
<keyword id="KW-0808">Transferase</keyword>
<protein>
    <recommendedName>
        <fullName>FO synthase</fullName>
    </recommendedName>
    <domain>
        <recommendedName>
            <fullName>7,8-didemethyl-8-hydroxy-5-deazariboflavin synthase</fullName>
            <ecNumber>4.3.1.32</ecNumber>
        </recommendedName>
    </domain>
    <domain>
        <recommendedName>
            <fullName>5-amino-6-(D-ribitylamino)uracil--L-tyrosine 4-hydroxyphenyl transferase</fullName>
            <ecNumber>2.5.1.147</ecNumber>
        </recommendedName>
    </domain>
</protein>
<proteinExistence type="inferred from homology"/>
<organism>
    <name type="scientific">Mycobacterium leprae (strain TN)</name>
    <dbReference type="NCBI Taxonomy" id="272631"/>
    <lineage>
        <taxon>Bacteria</taxon>
        <taxon>Bacillati</taxon>
        <taxon>Actinomycetota</taxon>
        <taxon>Actinomycetes</taxon>
        <taxon>Mycobacteriales</taxon>
        <taxon>Mycobacteriaceae</taxon>
        <taxon>Mycobacterium</taxon>
    </lineage>
</organism>
<feature type="chain" id="PRO_0000147770" description="FO synthase">
    <location>
        <begin position="1"/>
        <end position="863"/>
    </location>
</feature>
<feature type="domain" description="Radical SAM core 1" evidence="2">
    <location>
        <begin position="91"/>
        <end position="343"/>
    </location>
</feature>
<feature type="domain" description="Radical SAM core 2" evidence="2">
    <location>
        <begin position="551"/>
        <end position="792"/>
    </location>
</feature>
<feature type="region of interest" description="CofG-like">
    <location>
        <begin position="92"/>
        <end position="424"/>
    </location>
</feature>
<feature type="region of interest" description="CofH-like">
    <location>
        <begin position="528"/>
        <end position="861"/>
    </location>
</feature>
<feature type="binding site" evidence="1">
    <location>
        <position position="105"/>
    </location>
    <ligand>
        <name>[4Fe-4S] cluster</name>
        <dbReference type="ChEBI" id="CHEBI:49883"/>
        <label>1</label>
        <note>4Fe-4S-S-AdoMet</note>
    </ligand>
</feature>
<feature type="binding site" evidence="1">
    <location>
        <position position="109"/>
    </location>
    <ligand>
        <name>[4Fe-4S] cluster</name>
        <dbReference type="ChEBI" id="CHEBI:49883"/>
        <label>1</label>
        <note>4Fe-4S-S-AdoMet</note>
    </ligand>
</feature>
<feature type="binding site" evidence="1">
    <location>
        <position position="112"/>
    </location>
    <ligand>
        <name>[4Fe-4S] cluster</name>
        <dbReference type="ChEBI" id="CHEBI:49883"/>
        <label>1</label>
        <note>4Fe-4S-S-AdoMet</note>
    </ligand>
</feature>
<feature type="binding site" evidence="1">
    <location>
        <position position="565"/>
    </location>
    <ligand>
        <name>[4Fe-4S] cluster</name>
        <dbReference type="ChEBI" id="CHEBI:49883"/>
        <label>2</label>
        <note>4Fe-4S-S-AdoMet</note>
    </ligand>
</feature>
<feature type="binding site" evidence="1">
    <location>
        <position position="569"/>
    </location>
    <ligand>
        <name>[4Fe-4S] cluster</name>
        <dbReference type="ChEBI" id="CHEBI:49883"/>
        <label>2</label>
        <note>4Fe-4S-S-AdoMet</note>
    </ligand>
</feature>
<feature type="binding site" evidence="1">
    <location>
        <position position="572"/>
    </location>
    <ligand>
        <name>[4Fe-4S] cluster</name>
        <dbReference type="ChEBI" id="CHEBI:49883"/>
        <label>2</label>
        <note>4Fe-4S-S-AdoMet</note>
    </ligand>
</feature>
<name>FBIC_MYCLE</name>
<sequence length="863" mass="94360">MWGSYTKVSLIESQEPIALSRPVVPPKPNTSALRRVLRRARDGFALNIDEAVVAMTARGEDLADLCASAARVRDVGLETAGRRGADGRLPITYSRKVFIPVTHLCRDSCHYCTFVTAPDMLRTQGAGMYLEPNEILNLARRGSELGCKEALFTLGDRPEDRWAQARDWLAERGYDSTLSYLRAMAIRVLEETGLLPHLNPGVMSWSELSRLKPVAPSMGMMLETTSRRLFETKGLAHYGSLDKDPTVRLRVLTDAGRLSIPFTTGLLVGIGETLAERADTLHEIRKSNKEFGHVQEVIVQNFRAKEHTAMAAVPDARIEDYLATVAVARLVLGPAMRIQAPPNLVSREECLALVTAGVDDWGGVSPLTPDHVNPERPWPALHELAAVTAEAGYTLVQRLTAQPKYVQAGAAWIDPRVRGHVVALADPVTGLARDVNPVGMPWQEPDDVESAGRMDINTAIDTEGRNTEARSDLDSAFGDWESIRAHVHELADCAPERIDTDVLAALRSAERDPAGCTDDEYLALATADGPALEAVTALADSLRRDVVGDDVTFVVNRNINFTNICYTGCRFCAFAQRKGDTDAYSLSREEVAERAWEAHVQGATEVCMQGGIDPELPVTGYVDLVRAVKTRVPSMHVHAFSPMEIANGVAKSGFSIREWLISLREAGLDTIPGTAAEILDDEVRWVLTKGKLPTSMWIEIVTTAHEVGLRSSSTMMYGHVDGPRHWVAHLQVLRDIQDRTGGFTEFVPLPFVHQNSPLYLAGAARPGPTHRDNRAVHALARIMLHGRISHIQTSWVKLGVERTQAMLNGGANDLGGTLMEETISRMAGSEYGSAKTVAELIAIAEGIGRTARQRTTTYALRGA</sequence>
<dbReference type="EC" id="4.3.1.32"/>
<dbReference type="EC" id="2.5.1.147"/>
<dbReference type="EMBL" id="AL583922">
    <property type="protein sequence ID" value="CAC30442.1"/>
    <property type="molecule type" value="Genomic_DNA"/>
</dbReference>
<dbReference type="PIR" id="E87095">
    <property type="entry name" value="E87095"/>
</dbReference>
<dbReference type="RefSeq" id="NP_302048.1">
    <property type="nucleotide sequence ID" value="NC_002677.1"/>
</dbReference>
<dbReference type="RefSeq" id="WP_010908369.1">
    <property type="nucleotide sequence ID" value="NC_002677.1"/>
</dbReference>
<dbReference type="SMR" id="Q9CBX6"/>
<dbReference type="STRING" id="272631.gene:17575332"/>
<dbReference type="KEGG" id="mle:ML1492"/>
<dbReference type="PATRIC" id="fig|272631.5.peg.2800"/>
<dbReference type="Leproma" id="ML1492"/>
<dbReference type="eggNOG" id="COG1060">
    <property type="taxonomic scope" value="Bacteria"/>
</dbReference>
<dbReference type="HOGENOM" id="CLU_010522_1_0_11"/>
<dbReference type="OrthoDB" id="9802027at2"/>
<dbReference type="UniPathway" id="UPA00072"/>
<dbReference type="Proteomes" id="UP000000806">
    <property type="component" value="Chromosome"/>
</dbReference>
<dbReference type="GO" id="GO:0051539">
    <property type="term" value="F:4 iron, 4 sulfur cluster binding"/>
    <property type="evidence" value="ECO:0007669"/>
    <property type="project" value="UniProtKB-KW"/>
</dbReference>
<dbReference type="GO" id="GO:0141093">
    <property type="term" value="F:5-amino-6-(D-ribitylamino)uracil--L-tyrosine 4-hydroxyphenyl transferase activity"/>
    <property type="evidence" value="ECO:0007669"/>
    <property type="project" value="UniProtKB-EC"/>
</dbReference>
<dbReference type="GO" id="GO:0044689">
    <property type="term" value="F:7,8-didemethyl-8-hydroxy-5-deazariboflavin synthase activity"/>
    <property type="evidence" value="ECO:0007669"/>
    <property type="project" value="UniProtKB-EC"/>
</dbReference>
<dbReference type="GO" id="GO:0046872">
    <property type="term" value="F:metal ion binding"/>
    <property type="evidence" value="ECO:0007669"/>
    <property type="project" value="UniProtKB-KW"/>
</dbReference>
<dbReference type="CDD" id="cd01335">
    <property type="entry name" value="Radical_SAM"/>
    <property type="match status" value="2"/>
</dbReference>
<dbReference type="FunFam" id="3.20.20.70:FF:000134">
    <property type="entry name" value="7,8-didemethyl-8-hydroxy-5-deazariboflavin synthase"/>
    <property type="match status" value="1"/>
</dbReference>
<dbReference type="Gene3D" id="3.20.20.70">
    <property type="entry name" value="Aldolase class I"/>
    <property type="match status" value="2"/>
</dbReference>
<dbReference type="HAMAP" id="MF_01611">
    <property type="entry name" value="FO_synth_sub1"/>
    <property type="match status" value="1"/>
</dbReference>
<dbReference type="HAMAP" id="MF_01612">
    <property type="entry name" value="FO_synth_sub2"/>
    <property type="match status" value="1"/>
</dbReference>
<dbReference type="InterPro" id="IPR013785">
    <property type="entry name" value="Aldolase_TIM"/>
</dbReference>
<dbReference type="InterPro" id="IPR019939">
    <property type="entry name" value="CofG_family"/>
</dbReference>
<dbReference type="InterPro" id="IPR045567">
    <property type="entry name" value="CofH/MnqC-like_C"/>
</dbReference>
<dbReference type="InterPro" id="IPR019940">
    <property type="entry name" value="CofH_family"/>
</dbReference>
<dbReference type="InterPro" id="IPR006638">
    <property type="entry name" value="Elp3/MiaA/NifB-like_rSAM"/>
</dbReference>
<dbReference type="InterPro" id="IPR034405">
    <property type="entry name" value="F420"/>
</dbReference>
<dbReference type="InterPro" id="IPR020050">
    <property type="entry name" value="FO_synthase_su2"/>
</dbReference>
<dbReference type="InterPro" id="IPR007197">
    <property type="entry name" value="rSAM"/>
</dbReference>
<dbReference type="NCBIfam" id="TIGR00423">
    <property type="entry name" value="CofH family radical SAM protein"/>
    <property type="match status" value="1"/>
</dbReference>
<dbReference type="NCBIfam" id="TIGR03550">
    <property type="entry name" value="F420_cofG"/>
    <property type="match status" value="1"/>
</dbReference>
<dbReference type="NCBIfam" id="TIGR03551">
    <property type="entry name" value="F420_cofH"/>
    <property type="match status" value="1"/>
</dbReference>
<dbReference type="NCBIfam" id="NF004884">
    <property type="entry name" value="PRK06245.1"/>
    <property type="match status" value="1"/>
</dbReference>
<dbReference type="NCBIfam" id="NF005609">
    <property type="entry name" value="PRK07360.1"/>
    <property type="match status" value="1"/>
</dbReference>
<dbReference type="NCBIfam" id="NF006687">
    <property type="entry name" value="PRK09234.1"/>
    <property type="match status" value="1"/>
</dbReference>
<dbReference type="PANTHER" id="PTHR43076">
    <property type="entry name" value="FO SYNTHASE (COFH)"/>
    <property type="match status" value="1"/>
</dbReference>
<dbReference type="PANTHER" id="PTHR43076:SF1">
    <property type="entry name" value="LIPOYL SYNTHASE 2"/>
    <property type="match status" value="1"/>
</dbReference>
<dbReference type="Pfam" id="PF19288">
    <property type="entry name" value="CofH_C"/>
    <property type="match status" value="1"/>
</dbReference>
<dbReference type="Pfam" id="PF04055">
    <property type="entry name" value="Radical_SAM"/>
    <property type="match status" value="2"/>
</dbReference>
<dbReference type="SFLD" id="SFLDF00293">
    <property type="entry name" value="((2_3_4_5-tetrahydroxypentyl)a"/>
    <property type="match status" value="1"/>
</dbReference>
<dbReference type="SFLD" id="SFLDF00294">
    <property type="entry name" value="7_8-didemethyl-8-hydroxy-5-dea"/>
    <property type="match status" value="1"/>
</dbReference>
<dbReference type="SFLD" id="SFLDF00343">
    <property type="entry name" value="aminofutalosine_synthase_(mqnE"/>
    <property type="match status" value="1"/>
</dbReference>
<dbReference type="SFLD" id="SFLDG01064">
    <property type="entry name" value="F420__menaquinone_cofactor_bio"/>
    <property type="match status" value="1"/>
</dbReference>
<dbReference type="SFLD" id="SFLDS00029">
    <property type="entry name" value="Radical_SAM"/>
    <property type="match status" value="1"/>
</dbReference>
<dbReference type="SMART" id="SM00729">
    <property type="entry name" value="Elp3"/>
    <property type="match status" value="1"/>
</dbReference>
<dbReference type="SUPFAM" id="SSF102114">
    <property type="entry name" value="Radical SAM enzymes"/>
    <property type="match status" value="2"/>
</dbReference>
<dbReference type="PROSITE" id="PS51918">
    <property type="entry name" value="RADICAL_SAM"/>
    <property type="match status" value="2"/>
</dbReference>
<evidence type="ECO:0000250" key="1"/>
<evidence type="ECO:0000255" key="2">
    <source>
        <dbReference type="PROSITE-ProRule" id="PRU01266"/>
    </source>
</evidence>
<evidence type="ECO:0000305" key="3"/>